<sequence length="512" mass="57662">MAISPTATELLLASFAFCLVFWVVRAWQPRVPKGLKSPPGPWGWPLLGHVLTLGKNPHLVLARLSQRYGDVLQIRIGSTPVLVLSGLDTIRQALVQQGDDFKGRPNLYSFSLVTDGHSMSFSPDSGPVWAARRRLAQSALNTFSIASDPASSSSCYLEDHVSKEAEALLSRLQEQMAEVGSFDPHSQVVLSVANVIGAMCFGQHFPQDSEEKLSLIHSSNIFVENAYSGNPVDFFPILQYIPTPGLQRFKAFNQKLVQFLQKIIQEHYQDFDENNIQDITGALLKHCKKGSRANGGRIPHEKIVSLINDIFGAGFDTVTTAISWSLMYLVTNPEKQRKIQEELDTVVGRARRPRLSDRLQLPYLEASILEIFRHSSFIPFTVPHSTTRDTTLNGFYIPEKHLVFINQWQVNHDQKVWGDPFEFRPERFLTADGTAINKILSEKVMIFGLGKRRCIGEVLAKWEVFLFLAILLQQLEFSVPAGVKVDLTPIYGLTMRHVRCEHVQARPRFSIK</sequence>
<protein>
    <recommendedName>
        <fullName>Cytochrome P450 1A2</fullName>
        <ecNumber evidence="2">1.14.14.1</ecNumber>
    </recommendedName>
    <alternativeName>
        <fullName>CYPIA2</fullName>
    </alternativeName>
    <alternativeName>
        <fullName evidence="2">Cholesterol 25-hydroxylase</fullName>
    </alternativeName>
    <alternativeName>
        <fullName>Hydroperoxy icosatetraenoate dehydratase</fullName>
        <ecNumber evidence="2">4.2.1.152</ecNumber>
    </alternativeName>
</protein>
<reference key="1">
    <citation type="submission" date="2005-01" db="EMBL/GenBank/DDBJ databases">
        <title>Feline cytochrome P450 1A2.</title>
        <authorList>
            <person name="Tanaka N."/>
            <person name="Yokota H."/>
        </authorList>
    </citation>
    <scope>NUCLEOTIDE SEQUENCE [MRNA]</scope>
    <source>
        <tissue>Liver</tissue>
    </source>
</reference>
<feature type="chain" id="PRO_0000226727" description="Cytochrome P450 1A2">
    <location>
        <begin position="1"/>
        <end position="512"/>
    </location>
</feature>
<feature type="binding site" evidence="1">
    <location>
        <position position="222"/>
    </location>
    <ligand>
        <name>substrate</name>
    </ligand>
</feature>
<feature type="binding site" description="axial binding residue" evidence="1">
    <location>
        <position position="454"/>
    </location>
    <ligand>
        <name>heme</name>
        <dbReference type="ChEBI" id="CHEBI:30413"/>
    </ligand>
    <ligandPart>
        <name>Fe</name>
        <dbReference type="ChEBI" id="CHEBI:18248"/>
    </ligandPart>
</feature>
<feature type="glycosylation site" description="O-linked (GlcNAc) serine" evidence="1">
    <location>
        <position position="65"/>
    </location>
</feature>
<comment type="function">
    <text evidence="2">A cytochrome P450 monooxygenase involved in the metabolism of various endogenous substrates, including fatty acids, steroid hormones and vitamins. Mechanistically, uses molecular oxygen inserting one oxygen atom into a substrate, and reducing the second into a water molecule, with two electrons provided by NADPH via cytochrome P450 reductase (NADPH--hemoprotein reductase). Catalyzes the hydroxylation of carbon-hydrogen bonds. Exhibits high catalytic activity for the formation of hydroxyestrogens from estrone (E1) and 17beta-estradiol (E2), namely 2-hydroxy E1 and E2. Metabolizes cholesterol toward 25-hydroxycholesterol, a physiological regulator of cellular cholesterol homeostasis. May act as a major enzyme for all-trans retinoic acid biosynthesis in the liver. Catalyzes two successive oxidative transformation of all-trans retinol to all-trans retinal and then to the active form all-trans retinoic acid. Primarily catalyzes stereoselective epoxidation of the last double bond of polyunsaturated fatty acids (PUFA), displaying a strong preference for the (R,S) stereoisomer. Catalyzes bisallylic hydroxylation and omega-1 hydroxylation of PUFA. May also participate in eicosanoids metabolism by converting hydroperoxide species into oxo metabolites (lipoxygenase-like reaction, NADPH-independent). Plays a role in the oxidative metabolism of xenobiotics. Catalyzes the N-hydroxylation of heterocyclic amines and the O-deethylation of phenacetin. Metabolizes caffeine via N3-demethylation.</text>
</comment>
<comment type="catalytic activity">
    <reaction evidence="2">
        <text>an organic molecule + reduced [NADPH--hemoprotein reductase] + O2 = an alcohol + oxidized [NADPH--hemoprotein reductase] + H2O + H(+)</text>
        <dbReference type="Rhea" id="RHEA:17149"/>
        <dbReference type="Rhea" id="RHEA-COMP:11964"/>
        <dbReference type="Rhea" id="RHEA-COMP:11965"/>
        <dbReference type="ChEBI" id="CHEBI:15377"/>
        <dbReference type="ChEBI" id="CHEBI:15378"/>
        <dbReference type="ChEBI" id="CHEBI:15379"/>
        <dbReference type="ChEBI" id="CHEBI:30879"/>
        <dbReference type="ChEBI" id="CHEBI:57618"/>
        <dbReference type="ChEBI" id="CHEBI:58210"/>
        <dbReference type="ChEBI" id="CHEBI:142491"/>
        <dbReference type="EC" id="1.14.14.1"/>
    </reaction>
    <physiologicalReaction direction="left-to-right" evidence="2">
        <dbReference type="Rhea" id="RHEA:17150"/>
    </physiologicalReaction>
</comment>
<comment type="catalytic activity">
    <reaction evidence="2">
        <text>17beta-estradiol + reduced [NADPH--hemoprotein reductase] + O2 = 2-hydroxy-17beta-estradiol + oxidized [NADPH--hemoprotein reductase] + H2O + H(+)</text>
        <dbReference type="Rhea" id="RHEA:47212"/>
        <dbReference type="Rhea" id="RHEA-COMP:11964"/>
        <dbReference type="Rhea" id="RHEA-COMP:11965"/>
        <dbReference type="ChEBI" id="CHEBI:15377"/>
        <dbReference type="ChEBI" id="CHEBI:15378"/>
        <dbReference type="ChEBI" id="CHEBI:15379"/>
        <dbReference type="ChEBI" id="CHEBI:16469"/>
        <dbReference type="ChEBI" id="CHEBI:28744"/>
        <dbReference type="ChEBI" id="CHEBI:57618"/>
        <dbReference type="ChEBI" id="CHEBI:58210"/>
    </reaction>
    <physiologicalReaction direction="left-to-right" evidence="2">
        <dbReference type="Rhea" id="RHEA:47213"/>
    </physiologicalReaction>
</comment>
<comment type="catalytic activity">
    <reaction evidence="2">
        <text>17beta-estradiol + reduced [NADPH--hemoprotein reductase] + O2 = 4-hydroxy-17beta-estradiol + oxidized [NADPH--hemoprotein reductase] + H2O + H(+)</text>
        <dbReference type="Rhea" id="RHEA:47280"/>
        <dbReference type="Rhea" id="RHEA-COMP:11964"/>
        <dbReference type="Rhea" id="RHEA-COMP:11965"/>
        <dbReference type="ChEBI" id="CHEBI:15377"/>
        <dbReference type="ChEBI" id="CHEBI:15378"/>
        <dbReference type="ChEBI" id="CHEBI:15379"/>
        <dbReference type="ChEBI" id="CHEBI:16469"/>
        <dbReference type="ChEBI" id="CHEBI:57618"/>
        <dbReference type="ChEBI" id="CHEBI:58210"/>
        <dbReference type="ChEBI" id="CHEBI:62845"/>
    </reaction>
    <physiologicalReaction direction="left-to-right" evidence="2">
        <dbReference type="Rhea" id="RHEA:47281"/>
    </physiologicalReaction>
</comment>
<comment type="catalytic activity">
    <reaction evidence="2">
        <text>estrone + reduced [NADPH--hemoprotein reductase] + O2 = 2-hydroxyestrone + oxidized [NADPH--hemoprotein reductase] + H2O + H(+)</text>
        <dbReference type="Rhea" id="RHEA:47208"/>
        <dbReference type="Rhea" id="RHEA-COMP:11964"/>
        <dbReference type="Rhea" id="RHEA-COMP:11965"/>
        <dbReference type="ChEBI" id="CHEBI:1156"/>
        <dbReference type="ChEBI" id="CHEBI:15377"/>
        <dbReference type="ChEBI" id="CHEBI:15378"/>
        <dbReference type="ChEBI" id="CHEBI:15379"/>
        <dbReference type="ChEBI" id="CHEBI:17263"/>
        <dbReference type="ChEBI" id="CHEBI:57618"/>
        <dbReference type="ChEBI" id="CHEBI:58210"/>
    </reaction>
    <physiologicalReaction direction="left-to-right" evidence="2">
        <dbReference type="Rhea" id="RHEA:47209"/>
    </physiologicalReaction>
</comment>
<comment type="catalytic activity">
    <reaction evidence="2">
        <text>estrone + reduced [NADPH--hemoprotein reductase] + O2 = 4-hydroxyestrone + oxidized [NADPH--hemoprotein reductase] + H2O + H(+)</text>
        <dbReference type="Rhea" id="RHEA:47292"/>
        <dbReference type="Rhea" id="RHEA-COMP:11964"/>
        <dbReference type="Rhea" id="RHEA-COMP:11965"/>
        <dbReference type="ChEBI" id="CHEBI:15377"/>
        <dbReference type="ChEBI" id="CHEBI:15378"/>
        <dbReference type="ChEBI" id="CHEBI:15379"/>
        <dbReference type="ChEBI" id="CHEBI:17263"/>
        <dbReference type="ChEBI" id="CHEBI:57618"/>
        <dbReference type="ChEBI" id="CHEBI:58210"/>
        <dbReference type="ChEBI" id="CHEBI:87602"/>
    </reaction>
    <physiologicalReaction direction="left-to-right" evidence="2">
        <dbReference type="Rhea" id="RHEA:47293"/>
    </physiologicalReaction>
</comment>
<comment type="catalytic activity">
    <reaction evidence="2">
        <text>cholesterol + reduced [NADPH--hemoprotein reductase] + O2 = 25-hydroxycholesterol + oxidized [NADPH--hemoprotein reductase] + H2O + H(+)</text>
        <dbReference type="Rhea" id="RHEA:50256"/>
        <dbReference type="Rhea" id="RHEA-COMP:11964"/>
        <dbReference type="Rhea" id="RHEA-COMP:11965"/>
        <dbReference type="ChEBI" id="CHEBI:15377"/>
        <dbReference type="ChEBI" id="CHEBI:15378"/>
        <dbReference type="ChEBI" id="CHEBI:15379"/>
        <dbReference type="ChEBI" id="CHEBI:16113"/>
        <dbReference type="ChEBI" id="CHEBI:42977"/>
        <dbReference type="ChEBI" id="CHEBI:57618"/>
        <dbReference type="ChEBI" id="CHEBI:58210"/>
    </reaction>
    <physiologicalReaction direction="left-to-right" evidence="2">
        <dbReference type="Rhea" id="RHEA:50257"/>
    </physiologicalReaction>
</comment>
<comment type="catalytic activity">
    <reaction evidence="2">
        <text>all-trans-retinol + reduced [NADPH--hemoprotein reductase] + O2 = all-trans-retinal + oxidized [NADPH--hemoprotein reductase] + 2 H2O + H(+)</text>
        <dbReference type="Rhea" id="RHEA:42092"/>
        <dbReference type="Rhea" id="RHEA-COMP:11964"/>
        <dbReference type="Rhea" id="RHEA-COMP:11965"/>
        <dbReference type="ChEBI" id="CHEBI:15377"/>
        <dbReference type="ChEBI" id="CHEBI:15378"/>
        <dbReference type="ChEBI" id="CHEBI:15379"/>
        <dbReference type="ChEBI" id="CHEBI:17336"/>
        <dbReference type="ChEBI" id="CHEBI:17898"/>
        <dbReference type="ChEBI" id="CHEBI:57618"/>
        <dbReference type="ChEBI" id="CHEBI:58210"/>
    </reaction>
    <physiologicalReaction direction="left-to-right" evidence="2">
        <dbReference type="Rhea" id="RHEA:42093"/>
    </physiologicalReaction>
</comment>
<comment type="catalytic activity">
    <reaction evidence="2">
        <text>all-trans-retinal + reduced [NADPH--hemoprotein reductase] + O2 = all-trans-retinoate + oxidized [NADPH--hemoprotein reductase] + H2O + 2 H(+)</text>
        <dbReference type="Rhea" id="RHEA:42088"/>
        <dbReference type="Rhea" id="RHEA-COMP:11964"/>
        <dbReference type="Rhea" id="RHEA-COMP:11965"/>
        <dbReference type="ChEBI" id="CHEBI:15377"/>
        <dbReference type="ChEBI" id="CHEBI:15378"/>
        <dbReference type="ChEBI" id="CHEBI:15379"/>
        <dbReference type="ChEBI" id="CHEBI:17898"/>
        <dbReference type="ChEBI" id="CHEBI:35291"/>
        <dbReference type="ChEBI" id="CHEBI:57618"/>
        <dbReference type="ChEBI" id="CHEBI:58210"/>
    </reaction>
    <physiologicalReaction direction="left-to-right" evidence="2">
        <dbReference type="Rhea" id="RHEA:42089"/>
    </physiologicalReaction>
</comment>
<comment type="catalytic activity">
    <reaction evidence="2">
        <text>(5Z,8Z,11Z,14Z)-eicosatetraenoate + reduced [NADPH--hemoprotein reductase] + O2 = (14R,15S)-epoxy-(5Z,8Z,11Z)-eicosatrienoate + oxidized [NADPH--hemoprotein reductase] + H2O + H(+)</text>
        <dbReference type="Rhea" id="RHEA:49860"/>
        <dbReference type="Rhea" id="RHEA-COMP:11964"/>
        <dbReference type="Rhea" id="RHEA-COMP:11965"/>
        <dbReference type="ChEBI" id="CHEBI:15377"/>
        <dbReference type="ChEBI" id="CHEBI:15378"/>
        <dbReference type="ChEBI" id="CHEBI:15379"/>
        <dbReference type="ChEBI" id="CHEBI:32395"/>
        <dbReference type="ChEBI" id="CHEBI:57618"/>
        <dbReference type="ChEBI" id="CHEBI:58210"/>
        <dbReference type="ChEBI" id="CHEBI:131965"/>
    </reaction>
    <physiologicalReaction direction="left-to-right" evidence="2">
        <dbReference type="Rhea" id="RHEA:49861"/>
    </physiologicalReaction>
</comment>
<comment type="catalytic activity">
    <reaction evidence="2">
        <text>(5Z,8Z,11Z,14Z)-eicosatetraenoate + reduced [NADPH--hemoprotein reductase] + O2 = (14S,15R)-epoxy-(5Z,8Z,11Z)-eicosatrienoate + oxidized [NADPH--hemoprotein reductase] + H2O + H(+)</text>
        <dbReference type="Rhea" id="RHEA:49856"/>
        <dbReference type="Rhea" id="RHEA-COMP:11964"/>
        <dbReference type="Rhea" id="RHEA-COMP:11965"/>
        <dbReference type="ChEBI" id="CHEBI:15377"/>
        <dbReference type="ChEBI" id="CHEBI:15378"/>
        <dbReference type="ChEBI" id="CHEBI:15379"/>
        <dbReference type="ChEBI" id="CHEBI:32395"/>
        <dbReference type="ChEBI" id="CHEBI:57618"/>
        <dbReference type="ChEBI" id="CHEBI:58210"/>
        <dbReference type="ChEBI" id="CHEBI:131964"/>
    </reaction>
    <physiologicalReaction direction="left-to-right" evidence="2">
        <dbReference type="Rhea" id="RHEA:49857"/>
    </physiologicalReaction>
</comment>
<comment type="catalytic activity">
    <reaction evidence="2">
        <text>(5Z,8Z,11Z,14Z,17Z)-eicosapentaenoate + reduced [NADPH--hemoprotein reductase] + O2 = (17R,18S)-epoxy-(5Z,8Z,11Z,14Z)-eicosatetraenoate + oxidized [NADPH--hemoprotein reductase] + H2O + H(+)</text>
        <dbReference type="Rhea" id="RHEA:39779"/>
        <dbReference type="Rhea" id="RHEA-COMP:11964"/>
        <dbReference type="Rhea" id="RHEA-COMP:11965"/>
        <dbReference type="ChEBI" id="CHEBI:15377"/>
        <dbReference type="ChEBI" id="CHEBI:15378"/>
        <dbReference type="ChEBI" id="CHEBI:15379"/>
        <dbReference type="ChEBI" id="CHEBI:57618"/>
        <dbReference type="ChEBI" id="CHEBI:58210"/>
        <dbReference type="ChEBI" id="CHEBI:58562"/>
        <dbReference type="ChEBI" id="CHEBI:76634"/>
    </reaction>
    <physiologicalReaction direction="left-to-right" evidence="2">
        <dbReference type="Rhea" id="RHEA:39780"/>
    </physiologicalReaction>
</comment>
<comment type="catalytic activity">
    <reaction evidence="2">
        <text>(4Z,7Z,10Z,13Z,16Z,19Z)-docosahexaenoate + reduced [NADPH--hemoprotein reductase] + O2 = (19R,20S)-epoxy-(4Z,7Z,10Z,13Z,16Z)-docosapentaenoate + oxidized [NADPH--hemoprotein reductase] + H2O + H(+)</text>
        <dbReference type="Rhea" id="RHEA:52120"/>
        <dbReference type="Rhea" id="RHEA-COMP:11964"/>
        <dbReference type="Rhea" id="RHEA-COMP:11965"/>
        <dbReference type="ChEBI" id="CHEBI:15377"/>
        <dbReference type="ChEBI" id="CHEBI:15378"/>
        <dbReference type="ChEBI" id="CHEBI:15379"/>
        <dbReference type="ChEBI" id="CHEBI:57618"/>
        <dbReference type="ChEBI" id="CHEBI:58210"/>
        <dbReference type="ChEBI" id="CHEBI:77016"/>
        <dbReference type="ChEBI" id="CHEBI:136410"/>
    </reaction>
    <physiologicalReaction direction="left-to-right" evidence="2">
        <dbReference type="Rhea" id="RHEA:52121"/>
    </physiologicalReaction>
</comment>
<comment type="catalytic activity">
    <reaction evidence="2">
        <text>(5S)-hydroperoxy-(6E,8Z,11Z,14Z)-eicosatetraenoate = 5-oxo-(6E,8Z,11Z,14Z)-eicosatetraenoate + H2O</text>
        <dbReference type="Rhea" id="RHEA:48632"/>
        <dbReference type="ChEBI" id="CHEBI:15377"/>
        <dbReference type="ChEBI" id="CHEBI:57450"/>
        <dbReference type="ChEBI" id="CHEBI:65342"/>
    </reaction>
    <physiologicalReaction direction="left-to-right" evidence="2">
        <dbReference type="Rhea" id="RHEA:48633"/>
    </physiologicalReaction>
</comment>
<comment type="catalytic activity">
    <reaction evidence="2">
        <text>(12S)-hydroperoxy-(5Z,8Z,10E,14Z)-eicosatetraenoate = 12-oxo-(5Z,8Z,10E,14Z)-eicosatetraenoate + H2O</text>
        <dbReference type="Rhea" id="RHEA:37947"/>
        <dbReference type="ChEBI" id="CHEBI:15377"/>
        <dbReference type="ChEBI" id="CHEBI:57444"/>
        <dbReference type="ChEBI" id="CHEBI:75231"/>
        <dbReference type="EC" id="4.2.1.152"/>
    </reaction>
    <physiologicalReaction direction="left-to-right" evidence="2">
        <dbReference type="Rhea" id="RHEA:37948"/>
    </physiologicalReaction>
</comment>
<comment type="catalytic activity">
    <reaction evidence="2">
        <text>(15S)-hydroperoxy-(5Z,8Z,11Z,13E)-eicosatetraenoate = 15-oxo-(5Z,8Z,11Z,13E)-eicosatetraenoate + H2O</text>
        <dbReference type="Rhea" id="RHEA:48636"/>
        <dbReference type="ChEBI" id="CHEBI:15377"/>
        <dbReference type="ChEBI" id="CHEBI:57410"/>
        <dbReference type="ChEBI" id="CHEBI:57446"/>
    </reaction>
    <physiologicalReaction direction="left-to-right" evidence="2">
        <dbReference type="Rhea" id="RHEA:48637"/>
    </physiologicalReaction>
</comment>
<comment type="catalytic activity">
    <reaction evidence="2">
        <text>(13S)-hydroperoxy-(9Z,11E)-octadecadienoate = 13-oxo-(9Z,11E)-octadecadienoate + H2O</text>
        <dbReference type="Rhea" id="RHEA:48716"/>
        <dbReference type="ChEBI" id="CHEBI:15377"/>
        <dbReference type="ChEBI" id="CHEBI:57466"/>
        <dbReference type="ChEBI" id="CHEBI:90781"/>
    </reaction>
    <physiologicalReaction direction="left-to-right" evidence="2">
        <dbReference type="Rhea" id="RHEA:48717"/>
    </physiologicalReaction>
</comment>
<comment type="catalytic activity">
    <reaction evidence="2">
        <text>(5Z,8Z,11Z,14Z)-eicosatetraenoate + reduced [NADPH--hemoprotein reductase] + O2 = 13-hydroxy-(5Z,8Z,11Z,14Z)-eicosatetraenoate + oxidized [NADPH--hemoprotein reductase] + H2O + H(+)</text>
        <dbReference type="Rhea" id="RHEA:52292"/>
        <dbReference type="Rhea" id="RHEA-COMP:11964"/>
        <dbReference type="Rhea" id="RHEA-COMP:11965"/>
        <dbReference type="ChEBI" id="CHEBI:15377"/>
        <dbReference type="ChEBI" id="CHEBI:15378"/>
        <dbReference type="ChEBI" id="CHEBI:15379"/>
        <dbReference type="ChEBI" id="CHEBI:32395"/>
        <dbReference type="ChEBI" id="CHEBI:57618"/>
        <dbReference type="ChEBI" id="CHEBI:58210"/>
        <dbReference type="ChEBI" id="CHEBI:136524"/>
    </reaction>
    <physiologicalReaction direction="left-to-right" evidence="2">
        <dbReference type="Rhea" id="RHEA:52293"/>
    </physiologicalReaction>
</comment>
<comment type="catalytic activity">
    <reaction evidence="2">
        <text>(5Z,8Z,11Z,14Z)-eicosatetraenoate + reduced [NADPH--hemoprotein reductase] + O2 = 19-hydroxy-(5Z,8Z,11Z,14Z)-eicosatetraenoate + oxidized [NADPH--hemoprotein reductase] + H2O + H(+)</text>
        <dbReference type="Rhea" id="RHEA:39759"/>
        <dbReference type="Rhea" id="RHEA-COMP:11964"/>
        <dbReference type="Rhea" id="RHEA-COMP:11965"/>
        <dbReference type="ChEBI" id="CHEBI:15377"/>
        <dbReference type="ChEBI" id="CHEBI:15378"/>
        <dbReference type="ChEBI" id="CHEBI:15379"/>
        <dbReference type="ChEBI" id="CHEBI:32395"/>
        <dbReference type="ChEBI" id="CHEBI:57618"/>
        <dbReference type="ChEBI" id="CHEBI:58210"/>
        <dbReference type="ChEBI" id="CHEBI:76627"/>
    </reaction>
    <physiologicalReaction direction="left-to-right" evidence="2">
        <dbReference type="Rhea" id="RHEA:39760"/>
    </physiologicalReaction>
</comment>
<comment type="catalytic activity">
    <reaction evidence="2">
        <text>(9Z,12Z)-octadecadienoate + reduced [NADPH--hemoprotein reductase] + O2 = 11-hydroxy-(9Z,12Z)-octadecadienoate + oxidized [NADPH--hemoprotein reductase] + H2O + H(+)</text>
        <dbReference type="Rhea" id="RHEA:52284"/>
        <dbReference type="Rhea" id="RHEA-COMP:11964"/>
        <dbReference type="Rhea" id="RHEA-COMP:11965"/>
        <dbReference type="ChEBI" id="CHEBI:15377"/>
        <dbReference type="ChEBI" id="CHEBI:15378"/>
        <dbReference type="ChEBI" id="CHEBI:15379"/>
        <dbReference type="ChEBI" id="CHEBI:30245"/>
        <dbReference type="ChEBI" id="CHEBI:57618"/>
        <dbReference type="ChEBI" id="CHEBI:58210"/>
        <dbReference type="ChEBI" id="CHEBI:136522"/>
    </reaction>
    <physiologicalReaction direction="left-to-right" evidence="2">
        <dbReference type="Rhea" id="RHEA:52285"/>
    </physiologicalReaction>
</comment>
<comment type="cofactor">
    <cofactor evidence="1">
        <name>heme</name>
        <dbReference type="ChEBI" id="CHEBI:30413"/>
    </cofactor>
</comment>
<comment type="pathway">
    <text evidence="2">Cofactor metabolism; retinol metabolism.</text>
</comment>
<comment type="pathway">
    <text evidence="2">Steroid metabolism; cholesterol metabolism.</text>
</comment>
<comment type="pathway">
    <text evidence="2">Lipid metabolism; arachidonate metabolism.</text>
</comment>
<comment type="subunit">
    <text evidence="2">Interacts with PGRMC1; the interaction requires PGRMC1 homodimerization.</text>
</comment>
<comment type="subcellular location">
    <subcellularLocation>
        <location evidence="2">Endoplasmic reticulum membrane</location>
        <topology evidence="2">Peripheral membrane protein</topology>
    </subcellularLocation>
    <subcellularLocation>
        <location evidence="2">Microsome membrane</location>
        <topology evidence="2">Peripheral membrane protein</topology>
    </subcellularLocation>
</comment>
<comment type="similarity">
    <text evidence="3">Belongs to the cytochrome P450 family.</text>
</comment>
<accession>Q5KQT6</accession>
<dbReference type="EC" id="1.14.14.1" evidence="2"/>
<dbReference type="EC" id="4.2.1.152" evidence="2"/>
<dbReference type="EMBL" id="AB199731">
    <property type="protein sequence ID" value="BAD86853.1"/>
    <property type="molecule type" value="mRNA"/>
</dbReference>
<dbReference type="RefSeq" id="NP_001041478.1">
    <property type="nucleotide sequence ID" value="NM_001048013.1"/>
</dbReference>
<dbReference type="RefSeq" id="XP_019687291.2">
    <property type="nucleotide sequence ID" value="XM_019831732.3"/>
</dbReference>
<dbReference type="SMR" id="Q5KQT6"/>
<dbReference type="FunCoup" id="Q5KQT6">
    <property type="interactions" value="13"/>
</dbReference>
<dbReference type="STRING" id="9685.ENSFCAP00000000315"/>
<dbReference type="GlyCosmos" id="Q5KQT6">
    <property type="glycosylation" value="1 site, No reported glycans"/>
</dbReference>
<dbReference type="PaxDb" id="9685-ENSFCAP00000000315"/>
<dbReference type="GeneID" id="554345"/>
<dbReference type="KEGG" id="fca:554345"/>
<dbReference type="CTD" id="1544"/>
<dbReference type="eggNOG" id="KOG0156">
    <property type="taxonomic scope" value="Eukaryota"/>
</dbReference>
<dbReference type="InParanoid" id="Q5KQT6"/>
<dbReference type="OrthoDB" id="1055148at2759"/>
<dbReference type="TreeFam" id="TF105095"/>
<dbReference type="UniPathway" id="UPA00296"/>
<dbReference type="UniPathway" id="UPA00383"/>
<dbReference type="UniPathway" id="UPA00912"/>
<dbReference type="Proteomes" id="UP000011712">
    <property type="component" value="Unplaced"/>
</dbReference>
<dbReference type="GO" id="GO:0005789">
    <property type="term" value="C:endoplasmic reticulum membrane"/>
    <property type="evidence" value="ECO:0007669"/>
    <property type="project" value="UniProtKB-SubCell"/>
</dbReference>
<dbReference type="GO" id="GO:0043231">
    <property type="term" value="C:intracellular membrane-bounded organelle"/>
    <property type="evidence" value="ECO:0000318"/>
    <property type="project" value="GO_Central"/>
</dbReference>
<dbReference type="GO" id="GO:0034875">
    <property type="term" value="F:caffeine oxidase activity"/>
    <property type="evidence" value="ECO:0007669"/>
    <property type="project" value="Ensembl"/>
</dbReference>
<dbReference type="GO" id="GO:0032451">
    <property type="term" value="F:demethylase activity"/>
    <property type="evidence" value="ECO:0007669"/>
    <property type="project" value="Ensembl"/>
</dbReference>
<dbReference type="GO" id="GO:0019899">
    <property type="term" value="F:enzyme binding"/>
    <property type="evidence" value="ECO:0007669"/>
    <property type="project" value="Ensembl"/>
</dbReference>
<dbReference type="GO" id="GO:0101020">
    <property type="term" value="F:estrogen 16-alpha-hydroxylase activity"/>
    <property type="evidence" value="ECO:0000250"/>
    <property type="project" value="UniProtKB"/>
</dbReference>
<dbReference type="GO" id="GO:0101021">
    <property type="term" value="F:estrogen 2-hydroxylase activity"/>
    <property type="evidence" value="ECO:0000250"/>
    <property type="project" value="UniProtKB"/>
</dbReference>
<dbReference type="GO" id="GO:0020037">
    <property type="term" value="F:heme binding"/>
    <property type="evidence" value="ECO:0000250"/>
    <property type="project" value="UniProtKB"/>
</dbReference>
<dbReference type="GO" id="GO:0106256">
    <property type="term" value="F:hydroperoxy icosatetraenoate dehydratase activity"/>
    <property type="evidence" value="ECO:0007669"/>
    <property type="project" value="UniProtKB-EC"/>
</dbReference>
<dbReference type="GO" id="GO:0005506">
    <property type="term" value="F:iron ion binding"/>
    <property type="evidence" value="ECO:0007669"/>
    <property type="project" value="InterPro"/>
</dbReference>
<dbReference type="GO" id="GO:0004497">
    <property type="term" value="F:monooxygenase activity"/>
    <property type="evidence" value="ECO:0000318"/>
    <property type="project" value="GO_Central"/>
</dbReference>
<dbReference type="GO" id="GO:0009820">
    <property type="term" value="P:alkaloid metabolic process"/>
    <property type="evidence" value="ECO:0007669"/>
    <property type="project" value="Ensembl"/>
</dbReference>
<dbReference type="GO" id="GO:0019369">
    <property type="term" value="P:arachidonate metabolic process"/>
    <property type="evidence" value="ECO:0007669"/>
    <property type="project" value="UniProtKB-UniPathway"/>
</dbReference>
<dbReference type="GO" id="GO:0045333">
    <property type="term" value="P:cellular respiration"/>
    <property type="evidence" value="ECO:0007669"/>
    <property type="project" value="Ensembl"/>
</dbReference>
<dbReference type="GO" id="GO:0071276">
    <property type="term" value="P:cellular response to cadmium ion"/>
    <property type="evidence" value="ECO:0007669"/>
    <property type="project" value="Ensembl"/>
</dbReference>
<dbReference type="GO" id="GO:0008203">
    <property type="term" value="P:cholesterol metabolic process"/>
    <property type="evidence" value="ECO:0007669"/>
    <property type="project" value="UniProtKB-UniPathway"/>
</dbReference>
<dbReference type="GO" id="GO:0018894">
    <property type="term" value="P:dibenzo-p-dioxin metabolic process"/>
    <property type="evidence" value="ECO:0007669"/>
    <property type="project" value="Ensembl"/>
</dbReference>
<dbReference type="GO" id="GO:0008210">
    <property type="term" value="P:estrogen metabolic process"/>
    <property type="evidence" value="ECO:0000250"/>
    <property type="project" value="UniProtKB"/>
</dbReference>
<dbReference type="GO" id="GO:0050665">
    <property type="term" value="P:hydrogen peroxide biosynthetic process"/>
    <property type="evidence" value="ECO:0007669"/>
    <property type="project" value="Ensembl"/>
</dbReference>
<dbReference type="GO" id="GO:0030324">
    <property type="term" value="P:lung development"/>
    <property type="evidence" value="ECO:0007669"/>
    <property type="project" value="Ensembl"/>
</dbReference>
<dbReference type="GO" id="GO:0016098">
    <property type="term" value="P:monoterpenoid metabolic process"/>
    <property type="evidence" value="ECO:0007669"/>
    <property type="project" value="Ensembl"/>
</dbReference>
<dbReference type="GO" id="GO:0070989">
    <property type="term" value="P:oxidative demethylation"/>
    <property type="evidence" value="ECO:0007669"/>
    <property type="project" value="Ensembl"/>
</dbReference>
<dbReference type="GO" id="GO:0006778">
    <property type="term" value="P:porphyrin-containing compound metabolic process"/>
    <property type="evidence" value="ECO:0007669"/>
    <property type="project" value="Ensembl"/>
</dbReference>
<dbReference type="GO" id="GO:0009791">
    <property type="term" value="P:post-embryonic development"/>
    <property type="evidence" value="ECO:0007669"/>
    <property type="project" value="Ensembl"/>
</dbReference>
<dbReference type="GO" id="GO:0010468">
    <property type="term" value="P:regulation of gene expression"/>
    <property type="evidence" value="ECO:0007669"/>
    <property type="project" value="Ensembl"/>
</dbReference>
<dbReference type="GO" id="GO:0042572">
    <property type="term" value="P:retinol metabolic process"/>
    <property type="evidence" value="ECO:0000250"/>
    <property type="project" value="UniProtKB"/>
</dbReference>
<dbReference type="GO" id="GO:0006706">
    <property type="term" value="P:steroid catabolic process"/>
    <property type="evidence" value="ECO:0007669"/>
    <property type="project" value="Ensembl"/>
</dbReference>
<dbReference type="GO" id="GO:0009403">
    <property type="term" value="P:toxin biosynthetic process"/>
    <property type="evidence" value="ECO:0007669"/>
    <property type="project" value="Ensembl"/>
</dbReference>
<dbReference type="GO" id="GO:0042178">
    <property type="term" value="P:xenobiotic catabolic process"/>
    <property type="evidence" value="ECO:0007669"/>
    <property type="project" value="Ensembl"/>
</dbReference>
<dbReference type="FunFam" id="1.10.630.10:FF:000002">
    <property type="entry name" value="Cytochrome P450 1A1"/>
    <property type="match status" value="1"/>
</dbReference>
<dbReference type="Gene3D" id="1.10.630.10">
    <property type="entry name" value="Cytochrome P450"/>
    <property type="match status" value="1"/>
</dbReference>
<dbReference type="InterPro" id="IPR001128">
    <property type="entry name" value="Cyt_P450"/>
</dbReference>
<dbReference type="InterPro" id="IPR017972">
    <property type="entry name" value="Cyt_P450_CS"/>
</dbReference>
<dbReference type="InterPro" id="IPR002401">
    <property type="entry name" value="Cyt_P450_E_grp-I"/>
</dbReference>
<dbReference type="InterPro" id="IPR008066">
    <property type="entry name" value="Cyt_P450_E_grp-I_CYP1"/>
</dbReference>
<dbReference type="InterPro" id="IPR036396">
    <property type="entry name" value="Cyt_P450_sf"/>
</dbReference>
<dbReference type="PANTHER" id="PTHR24289:SF21">
    <property type="entry name" value="CYTOCHROME P450 1A"/>
    <property type="match status" value="1"/>
</dbReference>
<dbReference type="PANTHER" id="PTHR24289">
    <property type="entry name" value="STEROID 17-ALPHA-HYDROXYLASE/17,20 LYASE"/>
    <property type="match status" value="1"/>
</dbReference>
<dbReference type="Pfam" id="PF00067">
    <property type="entry name" value="p450"/>
    <property type="match status" value="1"/>
</dbReference>
<dbReference type="PRINTS" id="PR00463">
    <property type="entry name" value="EP450I"/>
</dbReference>
<dbReference type="PRINTS" id="PR01683">
    <property type="entry name" value="EP450ICYP1A"/>
</dbReference>
<dbReference type="PRINTS" id="PR00385">
    <property type="entry name" value="P450"/>
</dbReference>
<dbReference type="SUPFAM" id="SSF48264">
    <property type="entry name" value="Cytochrome P450"/>
    <property type="match status" value="1"/>
</dbReference>
<dbReference type="PROSITE" id="PS00086">
    <property type="entry name" value="CYTOCHROME_P450"/>
    <property type="match status" value="1"/>
</dbReference>
<keyword id="KW-0256">Endoplasmic reticulum</keyword>
<keyword id="KW-0276">Fatty acid metabolism</keyword>
<keyword id="KW-0325">Glycoprotein</keyword>
<keyword id="KW-0349">Heme</keyword>
<keyword id="KW-0408">Iron</keyword>
<keyword id="KW-0443">Lipid metabolism</keyword>
<keyword id="KW-0456">Lyase</keyword>
<keyword id="KW-0472">Membrane</keyword>
<keyword id="KW-0479">Metal-binding</keyword>
<keyword id="KW-0492">Microsome</keyword>
<keyword id="KW-0503">Monooxygenase</keyword>
<keyword id="KW-0560">Oxidoreductase</keyword>
<keyword id="KW-1185">Reference proteome</keyword>
<keyword id="KW-0753">Steroid metabolism</keyword>
<keyword id="KW-1207">Sterol metabolism</keyword>
<organism>
    <name type="scientific">Felis catus</name>
    <name type="common">Cat</name>
    <name type="synonym">Felis silvestris catus</name>
    <dbReference type="NCBI Taxonomy" id="9685"/>
    <lineage>
        <taxon>Eukaryota</taxon>
        <taxon>Metazoa</taxon>
        <taxon>Chordata</taxon>
        <taxon>Craniata</taxon>
        <taxon>Vertebrata</taxon>
        <taxon>Euteleostomi</taxon>
        <taxon>Mammalia</taxon>
        <taxon>Eutheria</taxon>
        <taxon>Laurasiatheria</taxon>
        <taxon>Carnivora</taxon>
        <taxon>Feliformia</taxon>
        <taxon>Felidae</taxon>
        <taxon>Felinae</taxon>
        <taxon>Felis</taxon>
    </lineage>
</organism>
<gene>
    <name type="primary">CYP1A2</name>
</gene>
<evidence type="ECO:0000250" key="1"/>
<evidence type="ECO:0000250" key="2">
    <source>
        <dbReference type="UniProtKB" id="P05177"/>
    </source>
</evidence>
<evidence type="ECO:0000305" key="3"/>
<proteinExistence type="evidence at transcript level"/>
<name>CP1A2_FELCA</name>